<protein>
    <recommendedName>
        <fullName evidence="1">Chaperonin GroEL</fullName>
        <ecNumber evidence="1">5.6.1.7</ecNumber>
    </recommendedName>
    <alternativeName>
        <fullName evidence="1">60 kDa chaperonin</fullName>
    </alternativeName>
    <alternativeName>
        <fullName evidence="1">Chaperonin-60</fullName>
        <shortName evidence="1">Cpn60</shortName>
    </alternativeName>
</protein>
<accession>A8ZU48</accession>
<gene>
    <name evidence="1" type="primary">groEL</name>
    <name evidence="1" type="synonym">groL</name>
    <name type="ordered locus">Dole_0550</name>
</gene>
<evidence type="ECO:0000255" key="1">
    <source>
        <dbReference type="HAMAP-Rule" id="MF_00600"/>
    </source>
</evidence>
<dbReference type="EC" id="5.6.1.7" evidence="1"/>
<dbReference type="EMBL" id="CP000859">
    <property type="protein sequence ID" value="ABW66360.1"/>
    <property type="molecule type" value="Genomic_DNA"/>
</dbReference>
<dbReference type="RefSeq" id="WP_012173979.1">
    <property type="nucleotide sequence ID" value="NC_009943.1"/>
</dbReference>
<dbReference type="SMR" id="A8ZU48"/>
<dbReference type="STRING" id="96561.Dole_0550"/>
<dbReference type="KEGG" id="dol:Dole_0550"/>
<dbReference type="eggNOG" id="COG0459">
    <property type="taxonomic scope" value="Bacteria"/>
</dbReference>
<dbReference type="HOGENOM" id="CLU_016503_3_0_7"/>
<dbReference type="OrthoDB" id="9766614at2"/>
<dbReference type="Proteomes" id="UP000008561">
    <property type="component" value="Chromosome"/>
</dbReference>
<dbReference type="GO" id="GO:0005737">
    <property type="term" value="C:cytoplasm"/>
    <property type="evidence" value="ECO:0007669"/>
    <property type="project" value="UniProtKB-SubCell"/>
</dbReference>
<dbReference type="GO" id="GO:0005524">
    <property type="term" value="F:ATP binding"/>
    <property type="evidence" value="ECO:0007669"/>
    <property type="project" value="UniProtKB-UniRule"/>
</dbReference>
<dbReference type="GO" id="GO:0140662">
    <property type="term" value="F:ATP-dependent protein folding chaperone"/>
    <property type="evidence" value="ECO:0007669"/>
    <property type="project" value="InterPro"/>
</dbReference>
<dbReference type="GO" id="GO:0016853">
    <property type="term" value="F:isomerase activity"/>
    <property type="evidence" value="ECO:0007669"/>
    <property type="project" value="UniProtKB-KW"/>
</dbReference>
<dbReference type="GO" id="GO:0051082">
    <property type="term" value="F:unfolded protein binding"/>
    <property type="evidence" value="ECO:0007669"/>
    <property type="project" value="UniProtKB-UniRule"/>
</dbReference>
<dbReference type="GO" id="GO:0042026">
    <property type="term" value="P:protein refolding"/>
    <property type="evidence" value="ECO:0007669"/>
    <property type="project" value="UniProtKB-UniRule"/>
</dbReference>
<dbReference type="CDD" id="cd03344">
    <property type="entry name" value="GroEL"/>
    <property type="match status" value="1"/>
</dbReference>
<dbReference type="FunFam" id="3.50.7.10:FF:000001">
    <property type="entry name" value="60 kDa chaperonin"/>
    <property type="match status" value="1"/>
</dbReference>
<dbReference type="Gene3D" id="3.50.7.10">
    <property type="entry name" value="GroEL"/>
    <property type="match status" value="1"/>
</dbReference>
<dbReference type="Gene3D" id="1.10.560.10">
    <property type="entry name" value="GroEL-like equatorial domain"/>
    <property type="match status" value="1"/>
</dbReference>
<dbReference type="Gene3D" id="3.30.260.10">
    <property type="entry name" value="TCP-1-like chaperonin intermediate domain"/>
    <property type="match status" value="1"/>
</dbReference>
<dbReference type="HAMAP" id="MF_00600">
    <property type="entry name" value="CH60"/>
    <property type="match status" value="1"/>
</dbReference>
<dbReference type="InterPro" id="IPR018370">
    <property type="entry name" value="Chaperonin_Cpn60_CS"/>
</dbReference>
<dbReference type="InterPro" id="IPR001844">
    <property type="entry name" value="Cpn60/GroEL"/>
</dbReference>
<dbReference type="InterPro" id="IPR002423">
    <property type="entry name" value="Cpn60/GroEL/TCP-1"/>
</dbReference>
<dbReference type="InterPro" id="IPR027409">
    <property type="entry name" value="GroEL-like_apical_dom_sf"/>
</dbReference>
<dbReference type="InterPro" id="IPR027413">
    <property type="entry name" value="GROEL-like_equatorial_sf"/>
</dbReference>
<dbReference type="InterPro" id="IPR027410">
    <property type="entry name" value="TCP-1-like_intermed_sf"/>
</dbReference>
<dbReference type="NCBIfam" id="TIGR02348">
    <property type="entry name" value="GroEL"/>
    <property type="match status" value="1"/>
</dbReference>
<dbReference type="NCBIfam" id="NF000592">
    <property type="entry name" value="PRK00013.1"/>
    <property type="match status" value="1"/>
</dbReference>
<dbReference type="NCBIfam" id="NF009487">
    <property type="entry name" value="PRK12849.1"/>
    <property type="match status" value="1"/>
</dbReference>
<dbReference type="NCBIfam" id="NF009488">
    <property type="entry name" value="PRK12850.1"/>
    <property type="match status" value="1"/>
</dbReference>
<dbReference type="NCBIfam" id="NF009489">
    <property type="entry name" value="PRK12851.1"/>
    <property type="match status" value="1"/>
</dbReference>
<dbReference type="PANTHER" id="PTHR45633">
    <property type="entry name" value="60 KDA HEAT SHOCK PROTEIN, MITOCHONDRIAL"/>
    <property type="match status" value="1"/>
</dbReference>
<dbReference type="Pfam" id="PF00118">
    <property type="entry name" value="Cpn60_TCP1"/>
    <property type="match status" value="1"/>
</dbReference>
<dbReference type="PRINTS" id="PR00298">
    <property type="entry name" value="CHAPERONIN60"/>
</dbReference>
<dbReference type="SUPFAM" id="SSF52029">
    <property type="entry name" value="GroEL apical domain-like"/>
    <property type="match status" value="1"/>
</dbReference>
<dbReference type="SUPFAM" id="SSF48592">
    <property type="entry name" value="GroEL equatorial domain-like"/>
    <property type="match status" value="1"/>
</dbReference>
<dbReference type="SUPFAM" id="SSF54849">
    <property type="entry name" value="GroEL-intermediate domain like"/>
    <property type="match status" value="1"/>
</dbReference>
<dbReference type="PROSITE" id="PS00296">
    <property type="entry name" value="CHAPERONINS_CPN60"/>
    <property type="match status" value="1"/>
</dbReference>
<sequence length="550" mass="58072">MAGKEIKYSTKAREAMLAGVRTLADAVAVTLGPRGRNVVIEKSWGSPTVTKDGVTVAKEIELEDKFENMGAQMVKEVASKTSDTAGDGTTTATVLARAIYEEGQKLVAAGNNPMAIKRGIDKACEVAVKELAGMSKPTKNQREIAQVGTISANSDETIGNIIAEAMEKVGKEGVITVEEAKSMDTTLDVVEGMQFDRGYLSPYFVTDAEKMVVSLENAYILINEKKLSNMKELLPILEQTAKAGRPLLIIAEDIEGEALATLVVNKLRGTLNVAAVKAPGFGDRRKAMLEDIATLTGGQVVSEDVGINLEGITLGDLGHAKRITIDKDNTTIVDGAGKKADIEGRVKQIRAQIEDTTSDYDREKLQERLAKLVGGVAVINVGAATETEMKEKKARVEDALNATRAAVEEGVLPGGGVALVRCLDALSKIKIKSEEKLGVKVVMRAIEEPLRRIANNAGVEGSVVIEKVKNETGSFGYNAATGDYGDLIAAGVIDPTKVVRFALQNACSVASVMLTTEAMIAEKPSKEEPAAMPGGGMGGMGGMGGMGGMM</sequence>
<name>CH60_DESOH</name>
<reference key="1">
    <citation type="submission" date="2007-10" db="EMBL/GenBank/DDBJ databases">
        <title>Complete sequence of Desulfococcus oleovorans Hxd3.</title>
        <authorList>
            <consortium name="US DOE Joint Genome Institute"/>
            <person name="Copeland A."/>
            <person name="Lucas S."/>
            <person name="Lapidus A."/>
            <person name="Barry K."/>
            <person name="Glavina del Rio T."/>
            <person name="Dalin E."/>
            <person name="Tice H."/>
            <person name="Pitluck S."/>
            <person name="Kiss H."/>
            <person name="Brettin T."/>
            <person name="Bruce D."/>
            <person name="Detter J.C."/>
            <person name="Han C."/>
            <person name="Schmutz J."/>
            <person name="Larimer F."/>
            <person name="Land M."/>
            <person name="Hauser L."/>
            <person name="Kyrpides N."/>
            <person name="Kim E."/>
            <person name="Wawrik B."/>
            <person name="Richardson P."/>
        </authorList>
    </citation>
    <scope>NUCLEOTIDE SEQUENCE [LARGE SCALE GENOMIC DNA]</scope>
    <source>
        <strain>DSM 6200 / JCM 39069 / Hxd3</strain>
    </source>
</reference>
<keyword id="KW-0067">ATP-binding</keyword>
<keyword id="KW-0143">Chaperone</keyword>
<keyword id="KW-0963">Cytoplasm</keyword>
<keyword id="KW-0413">Isomerase</keyword>
<keyword id="KW-0547">Nucleotide-binding</keyword>
<keyword id="KW-1185">Reference proteome</keyword>
<feature type="chain" id="PRO_1000130002" description="Chaperonin GroEL">
    <location>
        <begin position="1"/>
        <end position="550"/>
    </location>
</feature>
<feature type="binding site" evidence="1">
    <location>
        <begin position="30"/>
        <end position="33"/>
    </location>
    <ligand>
        <name>ATP</name>
        <dbReference type="ChEBI" id="CHEBI:30616"/>
    </ligand>
</feature>
<feature type="binding site" evidence="1">
    <location>
        <position position="51"/>
    </location>
    <ligand>
        <name>ATP</name>
        <dbReference type="ChEBI" id="CHEBI:30616"/>
    </ligand>
</feature>
<feature type="binding site" evidence="1">
    <location>
        <begin position="87"/>
        <end position="91"/>
    </location>
    <ligand>
        <name>ATP</name>
        <dbReference type="ChEBI" id="CHEBI:30616"/>
    </ligand>
</feature>
<feature type="binding site" evidence="1">
    <location>
        <position position="415"/>
    </location>
    <ligand>
        <name>ATP</name>
        <dbReference type="ChEBI" id="CHEBI:30616"/>
    </ligand>
</feature>
<feature type="binding site" evidence="1">
    <location>
        <begin position="478"/>
        <end position="480"/>
    </location>
    <ligand>
        <name>ATP</name>
        <dbReference type="ChEBI" id="CHEBI:30616"/>
    </ligand>
</feature>
<feature type="binding site" evidence="1">
    <location>
        <position position="494"/>
    </location>
    <ligand>
        <name>ATP</name>
        <dbReference type="ChEBI" id="CHEBI:30616"/>
    </ligand>
</feature>
<organism>
    <name type="scientific">Desulfosudis oleivorans (strain DSM 6200 / JCM 39069 / Hxd3)</name>
    <name type="common">Desulfococcus oleovorans</name>
    <dbReference type="NCBI Taxonomy" id="96561"/>
    <lineage>
        <taxon>Bacteria</taxon>
        <taxon>Pseudomonadati</taxon>
        <taxon>Thermodesulfobacteriota</taxon>
        <taxon>Desulfobacteria</taxon>
        <taxon>Desulfobacterales</taxon>
        <taxon>Desulfosudaceae</taxon>
        <taxon>Desulfosudis</taxon>
    </lineage>
</organism>
<comment type="function">
    <text evidence="1">Together with its co-chaperonin GroES, plays an essential role in assisting protein folding. The GroEL-GroES system forms a nano-cage that allows encapsulation of the non-native substrate proteins and provides a physical environment optimized to promote and accelerate protein folding.</text>
</comment>
<comment type="catalytic activity">
    <reaction evidence="1">
        <text>ATP + H2O + a folded polypeptide = ADP + phosphate + an unfolded polypeptide.</text>
        <dbReference type="EC" id="5.6.1.7"/>
    </reaction>
</comment>
<comment type="subunit">
    <text evidence="1">Forms a cylinder of 14 subunits composed of two heptameric rings stacked back-to-back. Interacts with the co-chaperonin GroES.</text>
</comment>
<comment type="subcellular location">
    <subcellularLocation>
        <location evidence="1">Cytoplasm</location>
    </subcellularLocation>
</comment>
<comment type="similarity">
    <text evidence="1">Belongs to the chaperonin (HSP60) family.</text>
</comment>
<proteinExistence type="inferred from homology"/>